<accession>B6I5Q5</accession>
<keyword id="KW-0997">Cell inner membrane</keyword>
<keyword id="KW-1003">Cell membrane</keyword>
<keyword id="KW-0460">Magnesium</keyword>
<keyword id="KW-0472">Membrane</keyword>
<keyword id="KW-0808">Transferase</keyword>
<keyword id="KW-0812">Transmembrane</keyword>
<keyword id="KW-1133">Transmembrane helix</keyword>
<keyword id="KW-0831">Ubiquinone biosynthesis</keyword>
<reference key="1">
    <citation type="journal article" date="2008" name="DNA Res.">
        <title>Complete genome sequence and comparative analysis of the wild-type commensal Escherichia coli strain SE11 isolated from a healthy adult.</title>
        <authorList>
            <person name="Oshima K."/>
            <person name="Toh H."/>
            <person name="Ogura Y."/>
            <person name="Sasamoto H."/>
            <person name="Morita H."/>
            <person name="Park S.-H."/>
            <person name="Ooka T."/>
            <person name="Iyoda S."/>
            <person name="Taylor T.D."/>
            <person name="Hayashi T."/>
            <person name="Itoh K."/>
            <person name="Hattori M."/>
        </authorList>
    </citation>
    <scope>NUCLEOTIDE SEQUENCE [LARGE SCALE GENOMIC DNA]</scope>
    <source>
        <strain>SE11</strain>
    </source>
</reference>
<proteinExistence type="inferred from homology"/>
<gene>
    <name evidence="1" type="primary">ubiA</name>
    <name type="ordered locus">ECSE_4332</name>
</gene>
<organism>
    <name type="scientific">Escherichia coli (strain SE11)</name>
    <dbReference type="NCBI Taxonomy" id="409438"/>
    <lineage>
        <taxon>Bacteria</taxon>
        <taxon>Pseudomonadati</taxon>
        <taxon>Pseudomonadota</taxon>
        <taxon>Gammaproteobacteria</taxon>
        <taxon>Enterobacterales</taxon>
        <taxon>Enterobacteriaceae</taxon>
        <taxon>Escherichia</taxon>
    </lineage>
</organism>
<dbReference type="EC" id="2.5.1.39" evidence="1"/>
<dbReference type="EMBL" id="AP009240">
    <property type="protein sequence ID" value="BAG79856.1"/>
    <property type="molecule type" value="Genomic_DNA"/>
</dbReference>
<dbReference type="RefSeq" id="WP_000455228.1">
    <property type="nucleotide sequence ID" value="NC_011415.1"/>
</dbReference>
<dbReference type="SMR" id="B6I5Q5"/>
<dbReference type="GeneID" id="75204184"/>
<dbReference type="KEGG" id="ecy:ECSE_4332"/>
<dbReference type="HOGENOM" id="CLU_034879_1_0_6"/>
<dbReference type="UniPathway" id="UPA00232"/>
<dbReference type="Proteomes" id="UP000008199">
    <property type="component" value="Chromosome"/>
</dbReference>
<dbReference type="GO" id="GO:0005886">
    <property type="term" value="C:plasma membrane"/>
    <property type="evidence" value="ECO:0007669"/>
    <property type="project" value="UniProtKB-SubCell"/>
</dbReference>
<dbReference type="GO" id="GO:0008412">
    <property type="term" value="F:4-hydroxybenzoate polyprenyltransferase activity"/>
    <property type="evidence" value="ECO:0007669"/>
    <property type="project" value="UniProtKB-UniRule"/>
</dbReference>
<dbReference type="GO" id="GO:0006744">
    <property type="term" value="P:ubiquinone biosynthetic process"/>
    <property type="evidence" value="ECO:0007669"/>
    <property type="project" value="UniProtKB-UniRule"/>
</dbReference>
<dbReference type="CDD" id="cd13959">
    <property type="entry name" value="PT_UbiA_COQ2"/>
    <property type="match status" value="1"/>
</dbReference>
<dbReference type="FunFam" id="1.10.357.140:FF:000002">
    <property type="entry name" value="4-hydroxybenzoate octaprenyltransferase"/>
    <property type="match status" value="1"/>
</dbReference>
<dbReference type="FunFam" id="1.20.120.1780:FF:000001">
    <property type="entry name" value="4-hydroxybenzoate octaprenyltransferase"/>
    <property type="match status" value="1"/>
</dbReference>
<dbReference type="Gene3D" id="1.10.357.140">
    <property type="entry name" value="UbiA prenyltransferase"/>
    <property type="match status" value="1"/>
</dbReference>
<dbReference type="Gene3D" id="1.20.120.1780">
    <property type="entry name" value="UbiA prenyltransferase"/>
    <property type="match status" value="1"/>
</dbReference>
<dbReference type="HAMAP" id="MF_01635">
    <property type="entry name" value="UbiA"/>
    <property type="match status" value="1"/>
</dbReference>
<dbReference type="InterPro" id="IPR006370">
    <property type="entry name" value="HB_polyprenyltransferase-like"/>
</dbReference>
<dbReference type="InterPro" id="IPR039653">
    <property type="entry name" value="Prenyltransferase"/>
</dbReference>
<dbReference type="InterPro" id="IPR000537">
    <property type="entry name" value="UbiA_prenyltransferase"/>
</dbReference>
<dbReference type="InterPro" id="IPR030470">
    <property type="entry name" value="UbiA_prenylTrfase_CS"/>
</dbReference>
<dbReference type="InterPro" id="IPR044878">
    <property type="entry name" value="UbiA_sf"/>
</dbReference>
<dbReference type="NCBIfam" id="TIGR01474">
    <property type="entry name" value="ubiA_proteo"/>
    <property type="match status" value="1"/>
</dbReference>
<dbReference type="PANTHER" id="PTHR11048:SF28">
    <property type="entry name" value="4-HYDROXYBENZOATE POLYPRENYLTRANSFERASE, MITOCHONDRIAL"/>
    <property type="match status" value="1"/>
</dbReference>
<dbReference type="PANTHER" id="PTHR11048">
    <property type="entry name" value="PRENYLTRANSFERASES"/>
    <property type="match status" value="1"/>
</dbReference>
<dbReference type="Pfam" id="PF01040">
    <property type="entry name" value="UbiA"/>
    <property type="match status" value="1"/>
</dbReference>
<dbReference type="PROSITE" id="PS00943">
    <property type="entry name" value="UBIA"/>
    <property type="match status" value="1"/>
</dbReference>
<name>UBIA_ECOSE</name>
<evidence type="ECO:0000255" key="1">
    <source>
        <dbReference type="HAMAP-Rule" id="MF_01635"/>
    </source>
</evidence>
<protein>
    <recommendedName>
        <fullName evidence="1">4-hydroxybenzoate octaprenyltransferase</fullName>
        <ecNumber evidence="1">2.5.1.39</ecNumber>
    </recommendedName>
    <alternativeName>
        <fullName evidence="1">4-HB polyprenyltransferase</fullName>
    </alternativeName>
</protein>
<sequence>MEWSLTQNKLLAFHRLMRTDKPIGALLLLWPTLWALWVATPGVPQLWILAVFVAGVWLMRAAGCVVNDYADRKFDGHVKRTANRPLPSGAVTEKEARALFVVLVLISFLLVLTLNTMTILLSIAALALAWVYPFMKRYTHLPQVVLGAAFGWSIPMAFAAVSESVPLSCWLMFLANILWAVAYDTQYAMVDRDDDVKIGIKSTAILFGQYDKLIIGILQIGVLALMAIIGELNGLGWGYYWSIVVAGALFVYQQKLIANREREACFKAFMNNNYVGLVLFLGLAMSYWHF</sequence>
<feature type="chain" id="PRO_1000186672" description="4-hydroxybenzoate octaprenyltransferase">
    <location>
        <begin position="1"/>
        <end position="290"/>
    </location>
</feature>
<feature type="transmembrane region" description="Helical" evidence="1">
    <location>
        <begin position="23"/>
        <end position="43"/>
    </location>
</feature>
<feature type="transmembrane region" description="Helical" evidence="1">
    <location>
        <begin position="46"/>
        <end position="66"/>
    </location>
</feature>
<feature type="transmembrane region" description="Helical" evidence="1">
    <location>
        <begin position="99"/>
        <end position="119"/>
    </location>
</feature>
<feature type="transmembrane region" description="Helical" evidence="1">
    <location>
        <begin position="141"/>
        <end position="161"/>
    </location>
</feature>
<feature type="transmembrane region" description="Helical" evidence="1">
    <location>
        <begin position="163"/>
        <end position="183"/>
    </location>
</feature>
<feature type="transmembrane region" description="Helical" evidence="1">
    <location>
        <begin position="213"/>
        <end position="233"/>
    </location>
</feature>
<feature type="transmembrane region" description="Helical" evidence="1">
    <location>
        <begin position="234"/>
        <end position="254"/>
    </location>
</feature>
<feature type="transmembrane region" description="Helical" evidence="1">
    <location>
        <begin position="268"/>
        <end position="288"/>
    </location>
</feature>
<comment type="function">
    <text evidence="1">Catalyzes the prenylation of para-hydroxybenzoate (PHB) with an all-trans polyprenyl group. Mediates the second step in the final reaction sequence of ubiquinone-8 (UQ-8) biosynthesis, which is the condensation of the polyisoprenoid side chain with PHB, generating the first membrane-bound Q intermediate 3-octaprenyl-4-hydroxybenzoate.</text>
</comment>
<comment type="catalytic activity">
    <reaction evidence="1">
        <text>all-trans-octaprenyl diphosphate + 4-hydroxybenzoate = 4-hydroxy-3-(all-trans-octaprenyl)benzoate + diphosphate</text>
        <dbReference type="Rhea" id="RHEA:27782"/>
        <dbReference type="ChEBI" id="CHEBI:1617"/>
        <dbReference type="ChEBI" id="CHEBI:17879"/>
        <dbReference type="ChEBI" id="CHEBI:33019"/>
        <dbReference type="ChEBI" id="CHEBI:57711"/>
        <dbReference type="EC" id="2.5.1.39"/>
    </reaction>
</comment>
<comment type="cofactor">
    <cofactor evidence="1">
        <name>Mg(2+)</name>
        <dbReference type="ChEBI" id="CHEBI:18420"/>
    </cofactor>
</comment>
<comment type="pathway">
    <text evidence="1">Cofactor biosynthesis; ubiquinone biosynthesis.</text>
</comment>
<comment type="subcellular location">
    <subcellularLocation>
        <location evidence="1">Cell inner membrane</location>
        <topology evidence="1">Multi-pass membrane protein</topology>
    </subcellularLocation>
</comment>
<comment type="similarity">
    <text evidence="1">Belongs to the UbiA prenyltransferase family.</text>
</comment>